<protein>
    <recommendedName>
        <fullName>Guanylin</fullName>
    </recommendedName>
    <alternativeName>
        <fullName>Guanylate cyclase activator 2A</fullName>
    </alternativeName>
</protein>
<comment type="function">
    <text>Endogenous activator of intestinal guanylate cyclase. It stimulates this enzyme through the same receptor binding region as the heat-stable enterotoxins.</text>
</comment>
<comment type="subcellular location">
    <subcellularLocation>
        <location>Secreted</location>
    </subcellularLocation>
</comment>
<comment type="tissue specificity">
    <text>Localized in both crypts and villi in the small intestine and to superficial epithelial cells in the colon.</text>
</comment>
<comment type="similarity">
    <text evidence="3">Belongs to the guanylin family.</text>
</comment>
<keyword id="KW-1015">Disulfide bond</keyword>
<keyword id="KW-1185">Reference proteome</keyword>
<keyword id="KW-0964">Secreted</keyword>
<keyword id="KW-0732">Signal</keyword>
<reference key="1">
    <citation type="journal article" date="1992" name="Proc. Natl. Acad. Sci. U.S.A.">
        <title>Precursor structure, expression, and tissue distribution of human guanylin.</title>
        <authorList>
            <person name="de Sauvage F.J."/>
            <person name="Keshav S."/>
            <person name="Kuang W.J."/>
            <person name="Gillett N."/>
            <person name="Henzel W."/>
            <person name="Goeddel D.V."/>
        </authorList>
    </citation>
    <scope>NUCLEOTIDE SEQUENCE [MRNA]</scope>
    <source>
        <strain>C57BL/6J</strain>
        <tissue>Small intestine</tissue>
    </source>
</reference>
<reference key="2">
    <citation type="submission" date="1992-11" db="EMBL/GenBank/DDBJ databases">
        <title>Cloning of precursor cDNA for guanylin: an endogenous activator of intestinal guanylate cyclase.</title>
        <authorList>
            <person name="Kato J."/>
            <person name="Wiegand R.C."/>
            <person name="Currie M.G."/>
        </authorList>
    </citation>
    <scope>NUCLEOTIDE SEQUENCE</scope>
</reference>
<reference key="3">
    <citation type="journal article" date="1994" name="Genomics">
        <title>Genomic sequence of the murine guanylin gene.</title>
        <authorList>
            <person name="Sciaky D."/>
            <person name="Kosiba J.L."/>
            <person name="Cohen M.B."/>
        </authorList>
    </citation>
    <scope>NUCLEOTIDE SEQUENCE</scope>
    <source>
        <strain>129/Sv</strain>
    </source>
</reference>
<reference key="4">
    <citation type="journal article" date="2005" name="Science">
        <title>The transcriptional landscape of the mammalian genome.</title>
        <authorList>
            <person name="Carninci P."/>
            <person name="Kasukawa T."/>
            <person name="Katayama S."/>
            <person name="Gough J."/>
            <person name="Frith M.C."/>
            <person name="Maeda N."/>
            <person name="Oyama R."/>
            <person name="Ravasi T."/>
            <person name="Lenhard B."/>
            <person name="Wells C."/>
            <person name="Kodzius R."/>
            <person name="Shimokawa K."/>
            <person name="Bajic V.B."/>
            <person name="Brenner S.E."/>
            <person name="Batalov S."/>
            <person name="Forrest A.R."/>
            <person name="Zavolan M."/>
            <person name="Davis M.J."/>
            <person name="Wilming L.G."/>
            <person name="Aidinis V."/>
            <person name="Allen J.E."/>
            <person name="Ambesi-Impiombato A."/>
            <person name="Apweiler R."/>
            <person name="Aturaliya R.N."/>
            <person name="Bailey T.L."/>
            <person name="Bansal M."/>
            <person name="Baxter L."/>
            <person name="Beisel K.W."/>
            <person name="Bersano T."/>
            <person name="Bono H."/>
            <person name="Chalk A.M."/>
            <person name="Chiu K.P."/>
            <person name="Choudhary V."/>
            <person name="Christoffels A."/>
            <person name="Clutterbuck D.R."/>
            <person name="Crowe M.L."/>
            <person name="Dalla E."/>
            <person name="Dalrymple B.P."/>
            <person name="de Bono B."/>
            <person name="Della Gatta G."/>
            <person name="di Bernardo D."/>
            <person name="Down T."/>
            <person name="Engstrom P."/>
            <person name="Fagiolini M."/>
            <person name="Faulkner G."/>
            <person name="Fletcher C.F."/>
            <person name="Fukushima T."/>
            <person name="Furuno M."/>
            <person name="Futaki S."/>
            <person name="Gariboldi M."/>
            <person name="Georgii-Hemming P."/>
            <person name="Gingeras T.R."/>
            <person name="Gojobori T."/>
            <person name="Green R.E."/>
            <person name="Gustincich S."/>
            <person name="Harbers M."/>
            <person name="Hayashi Y."/>
            <person name="Hensch T.K."/>
            <person name="Hirokawa N."/>
            <person name="Hill D."/>
            <person name="Huminiecki L."/>
            <person name="Iacono M."/>
            <person name="Ikeo K."/>
            <person name="Iwama A."/>
            <person name="Ishikawa T."/>
            <person name="Jakt M."/>
            <person name="Kanapin A."/>
            <person name="Katoh M."/>
            <person name="Kawasawa Y."/>
            <person name="Kelso J."/>
            <person name="Kitamura H."/>
            <person name="Kitano H."/>
            <person name="Kollias G."/>
            <person name="Krishnan S.P."/>
            <person name="Kruger A."/>
            <person name="Kummerfeld S.K."/>
            <person name="Kurochkin I.V."/>
            <person name="Lareau L.F."/>
            <person name="Lazarevic D."/>
            <person name="Lipovich L."/>
            <person name="Liu J."/>
            <person name="Liuni S."/>
            <person name="McWilliam S."/>
            <person name="Madan Babu M."/>
            <person name="Madera M."/>
            <person name="Marchionni L."/>
            <person name="Matsuda H."/>
            <person name="Matsuzawa S."/>
            <person name="Miki H."/>
            <person name="Mignone F."/>
            <person name="Miyake S."/>
            <person name="Morris K."/>
            <person name="Mottagui-Tabar S."/>
            <person name="Mulder N."/>
            <person name="Nakano N."/>
            <person name="Nakauchi H."/>
            <person name="Ng P."/>
            <person name="Nilsson R."/>
            <person name="Nishiguchi S."/>
            <person name="Nishikawa S."/>
            <person name="Nori F."/>
            <person name="Ohara O."/>
            <person name="Okazaki Y."/>
            <person name="Orlando V."/>
            <person name="Pang K.C."/>
            <person name="Pavan W.J."/>
            <person name="Pavesi G."/>
            <person name="Pesole G."/>
            <person name="Petrovsky N."/>
            <person name="Piazza S."/>
            <person name="Reed J."/>
            <person name="Reid J.F."/>
            <person name="Ring B.Z."/>
            <person name="Ringwald M."/>
            <person name="Rost B."/>
            <person name="Ruan Y."/>
            <person name="Salzberg S.L."/>
            <person name="Sandelin A."/>
            <person name="Schneider C."/>
            <person name="Schoenbach C."/>
            <person name="Sekiguchi K."/>
            <person name="Semple C.A."/>
            <person name="Seno S."/>
            <person name="Sessa L."/>
            <person name="Sheng Y."/>
            <person name="Shibata Y."/>
            <person name="Shimada H."/>
            <person name="Shimada K."/>
            <person name="Silva D."/>
            <person name="Sinclair B."/>
            <person name="Sperling S."/>
            <person name="Stupka E."/>
            <person name="Sugiura K."/>
            <person name="Sultana R."/>
            <person name="Takenaka Y."/>
            <person name="Taki K."/>
            <person name="Tammoja K."/>
            <person name="Tan S.L."/>
            <person name="Tang S."/>
            <person name="Taylor M.S."/>
            <person name="Tegner J."/>
            <person name="Teichmann S.A."/>
            <person name="Ueda H.R."/>
            <person name="van Nimwegen E."/>
            <person name="Verardo R."/>
            <person name="Wei C.L."/>
            <person name="Yagi K."/>
            <person name="Yamanishi H."/>
            <person name="Zabarovsky E."/>
            <person name="Zhu S."/>
            <person name="Zimmer A."/>
            <person name="Hide W."/>
            <person name="Bult C."/>
            <person name="Grimmond S.M."/>
            <person name="Teasdale R.D."/>
            <person name="Liu E.T."/>
            <person name="Brusic V."/>
            <person name="Quackenbush J."/>
            <person name="Wahlestedt C."/>
            <person name="Mattick J.S."/>
            <person name="Hume D.A."/>
            <person name="Kai C."/>
            <person name="Sasaki D."/>
            <person name="Tomaru Y."/>
            <person name="Fukuda S."/>
            <person name="Kanamori-Katayama M."/>
            <person name="Suzuki M."/>
            <person name="Aoki J."/>
            <person name="Arakawa T."/>
            <person name="Iida J."/>
            <person name="Imamura K."/>
            <person name="Itoh M."/>
            <person name="Kato T."/>
            <person name="Kawaji H."/>
            <person name="Kawagashira N."/>
            <person name="Kawashima T."/>
            <person name="Kojima M."/>
            <person name="Kondo S."/>
            <person name="Konno H."/>
            <person name="Nakano K."/>
            <person name="Ninomiya N."/>
            <person name="Nishio T."/>
            <person name="Okada M."/>
            <person name="Plessy C."/>
            <person name="Shibata K."/>
            <person name="Shiraki T."/>
            <person name="Suzuki S."/>
            <person name="Tagami M."/>
            <person name="Waki K."/>
            <person name="Watahiki A."/>
            <person name="Okamura-Oho Y."/>
            <person name="Suzuki H."/>
            <person name="Kawai J."/>
            <person name="Hayashizaki Y."/>
        </authorList>
    </citation>
    <scope>NUCLEOTIDE SEQUENCE [LARGE SCALE MRNA]</scope>
    <source>
        <strain>C57BL/6J</strain>
        <tissue>Small intestine</tissue>
    </source>
</reference>
<reference key="5">
    <citation type="journal article" date="2004" name="Genome Res.">
        <title>The status, quality, and expansion of the NIH full-length cDNA project: the Mammalian Gene Collection (MGC).</title>
        <authorList>
            <consortium name="The MGC Project Team"/>
        </authorList>
    </citation>
    <scope>NUCLEOTIDE SEQUENCE [LARGE SCALE MRNA]</scope>
    <source>
        <strain>FVB/N</strain>
        <tissue>Colon</tissue>
    </source>
</reference>
<gene>
    <name type="primary">Guca2a</name>
    <name type="synonym">Guca2</name>
</gene>
<name>GUC2A_MOUSE</name>
<organism>
    <name type="scientific">Mus musculus</name>
    <name type="common">Mouse</name>
    <dbReference type="NCBI Taxonomy" id="10090"/>
    <lineage>
        <taxon>Eukaryota</taxon>
        <taxon>Metazoa</taxon>
        <taxon>Chordata</taxon>
        <taxon>Craniata</taxon>
        <taxon>Vertebrata</taxon>
        <taxon>Euteleostomi</taxon>
        <taxon>Mammalia</taxon>
        <taxon>Eutheria</taxon>
        <taxon>Euarchontoglires</taxon>
        <taxon>Glires</taxon>
        <taxon>Rodentia</taxon>
        <taxon>Myomorpha</taxon>
        <taxon>Muroidea</taxon>
        <taxon>Muridae</taxon>
        <taxon>Murinae</taxon>
        <taxon>Mus</taxon>
        <taxon>Mus</taxon>
    </lineage>
</organism>
<feature type="signal peptide" evidence="2">
    <location>
        <begin position="1"/>
        <end position="23"/>
    </location>
</feature>
<feature type="propeptide" id="PRO_0000013137">
    <location>
        <begin position="24"/>
        <end position="101"/>
    </location>
</feature>
<feature type="peptide" id="PRO_0000013138" description="Guanylin">
    <location>
        <begin position="102"/>
        <end position="116"/>
    </location>
</feature>
<feature type="disulfide bond" evidence="1">
    <location>
        <begin position="69"/>
        <end position="83"/>
    </location>
</feature>
<feature type="disulfide bond" evidence="1">
    <location>
        <begin position="105"/>
        <end position="113"/>
    </location>
</feature>
<feature type="disulfide bond" evidence="1">
    <location>
        <begin position="108"/>
        <end position="116"/>
    </location>
</feature>
<dbReference type="EMBL" id="M95175">
    <property type="protein sequence ID" value="AAA37758.1"/>
    <property type="molecule type" value="mRNA"/>
</dbReference>
<dbReference type="EMBL" id="L05516">
    <property type="protein sequence ID" value="AAA37715.1"/>
    <property type="molecule type" value="mRNA"/>
</dbReference>
<dbReference type="EMBL" id="U60528">
    <property type="protein sequence ID" value="AAB05758.1"/>
    <property type="molecule type" value="Genomic_DNA"/>
</dbReference>
<dbReference type="EMBL" id="AK075814">
    <property type="protein sequence ID" value="BAC35981.1"/>
    <property type="molecule type" value="mRNA"/>
</dbReference>
<dbReference type="EMBL" id="BC012640">
    <property type="protein sequence ID" value="AAH12640.1"/>
    <property type="molecule type" value="mRNA"/>
</dbReference>
<dbReference type="CCDS" id="CCDS18586.1"/>
<dbReference type="PIR" id="A55643">
    <property type="entry name" value="B46279"/>
</dbReference>
<dbReference type="RefSeq" id="NP_032216.1">
    <property type="nucleotide sequence ID" value="NM_008190.1"/>
</dbReference>
<dbReference type="SMR" id="P33680"/>
<dbReference type="FunCoup" id="P33680">
    <property type="interactions" value="7"/>
</dbReference>
<dbReference type="STRING" id="10090.ENSMUSP00000024015"/>
<dbReference type="PaxDb" id="10090-ENSMUSP00000024015"/>
<dbReference type="PeptideAtlas" id="P33680"/>
<dbReference type="ProteomicsDB" id="271064"/>
<dbReference type="Antibodypedia" id="2733">
    <property type="antibodies" value="176 antibodies from 21 providers"/>
</dbReference>
<dbReference type="DNASU" id="14915"/>
<dbReference type="Ensembl" id="ENSMUST00000024015.3">
    <property type="protein sequence ID" value="ENSMUSP00000024015.3"/>
    <property type="gene ID" value="ENSMUSG00000023247.3"/>
</dbReference>
<dbReference type="GeneID" id="14915"/>
<dbReference type="KEGG" id="mmu:14915"/>
<dbReference type="UCSC" id="uc008umv.1">
    <property type="organism name" value="mouse"/>
</dbReference>
<dbReference type="AGR" id="MGI:102738"/>
<dbReference type="CTD" id="2980"/>
<dbReference type="MGI" id="MGI:102738">
    <property type="gene designation" value="Guca2a"/>
</dbReference>
<dbReference type="VEuPathDB" id="HostDB:ENSMUSG00000023247"/>
<dbReference type="eggNOG" id="ENOG502S7QR">
    <property type="taxonomic scope" value="Eukaryota"/>
</dbReference>
<dbReference type="GeneTree" id="ENSGT00940000154436"/>
<dbReference type="HOGENOM" id="CLU_166952_0_0_1"/>
<dbReference type="InParanoid" id="P33680"/>
<dbReference type="OMA" id="CAEPMLP"/>
<dbReference type="OrthoDB" id="9926421at2759"/>
<dbReference type="PhylomeDB" id="P33680"/>
<dbReference type="TreeFam" id="TF330731"/>
<dbReference type="Reactome" id="R-MMU-8935690">
    <property type="pathway name" value="Digestion"/>
</dbReference>
<dbReference type="BioGRID-ORCS" id="14915">
    <property type="hits" value="0 hits in 76 CRISPR screens"/>
</dbReference>
<dbReference type="PRO" id="PR:P33680"/>
<dbReference type="Proteomes" id="UP000000589">
    <property type="component" value="Chromosome 4"/>
</dbReference>
<dbReference type="RNAct" id="P33680">
    <property type="molecule type" value="protein"/>
</dbReference>
<dbReference type="Bgee" id="ENSMUSG00000023247">
    <property type="expression patterns" value="Expressed in right colon and 59 other cell types or tissues"/>
</dbReference>
<dbReference type="GO" id="GO:0005576">
    <property type="term" value="C:extracellular region"/>
    <property type="evidence" value="ECO:0007669"/>
    <property type="project" value="UniProtKB-SubCell"/>
</dbReference>
<dbReference type="GO" id="GO:0030250">
    <property type="term" value="F:guanylate cyclase activator activity"/>
    <property type="evidence" value="ECO:0007669"/>
    <property type="project" value="Ensembl"/>
</dbReference>
<dbReference type="FunFam" id="3.90.1450.10:FF:000002">
    <property type="entry name" value="Guanylate cyclase activator 2A"/>
    <property type="match status" value="1"/>
</dbReference>
<dbReference type="Gene3D" id="3.90.1450.10">
    <property type="entry name" value="Guanylin"/>
    <property type="match status" value="1"/>
</dbReference>
<dbReference type="InterPro" id="IPR000879">
    <property type="entry name" value="Guanylin"/>
</dbReference>
<dbReference type="InterPro" id="IPR036382">
    <property type="entry name" value="Guanylin_sf"/>
</dbReference>
<dbReference type="PANTHER" id="PTHR11318:SF3">
    <property type="entry name" value="GUANYLIN"/>
    <property type="match status" value="1"/>
</dbReference>
<dbReference type="PANTHER" id="PTHR11318">
    <property type="entry name" value="GUANYLIN FAMILY MEMBER"/>
    <property type="match status" value="1"/>
</dbReference>
<dbReference type="Pfam" id="PF02058">
    <property type="entry name" value="Guanylin"/>
    <property type="match status" value="1"/>
</dbReference>
<dbReference type="PIRSF" id="PIRSF001849">
    <property type="entry name" value="Guanylin"/>
    <property type="match status" value="1"/>
</dbReference>
<dbReference type="PRINTS" id="PR00774">
    <property type="entry name" value="GUANYLIN"/>
</dbReference>
<dbReference type="SUPFAM" id="SSF89890">
    <property type="entry name" value="Proguanylin"/>
    <property type="match status" value="1"/>
</dbReference>
<sequence>MNACVLSVLCLLGALAVLVEGVTVQDGDLSFPLESVKKLKGLREVQEPRLVSHKKFAPRLLQPVAPQLCSSHSALPEALRPVCEKPNAEEILQRLEAIAQDPNTCEICAYAACTGC</sequence>
<accession>P33680</accession>
<proteinExistence type="evidence at transcript level"/>
<evidence type="ECO:0000250" key="1"/>
<evidence type="ECO:0000255" key="2"/>
<evidence type="ECO:0000305" key="3"/>